<sequence length="318" mass="36825">MLNSFDAAYHSLCEEVLEIGNTRNDRTNTGTISKFGHQLRFDLSKGFPLLTTKKVSFKLVATELLWFIKGDTNIQYLLKYNNNIWNEWAFENYIKSDEYNGPDMTDFGHRALSDPEFNEQYKEQMKQFKQRILEDDTFAKQFGDLGNVYGKQWRDWVDKDGNHFDQLKTVIEQIKHNPDSRRHIVSAWNPTEIDTMALPPCHTMFQFYVQDGKLSCQLYQRSADIFLGVPFNIASYALLTHLIAKECGLEVGEFVHTFGDAHIYSNHIDAIQTQLARESFNPPTLKINSDKSIFDINYEDLEIVDYESHPAIKAPIAV</sequence>
<accession>P67047</accession>
<accession>Q99U61</accession>
<name>TYSY_STAAN</name>
<reference key="1">
    <citation type="journal article" date="2001" name="Lancet">
        <title>Whole genome sequencing of meticillin-resistant Staphylococcus aureus.</title>
        <authorList>
            <person name="Kuroda M."/>
            <person name="Ohta T."/>
            <person name="Uchiyama I."/>
            <person name="Baba T."/>
            <person name="Yuzawa H."/>
            <person name="Kobayashi I."/>
            <person name="Cui L."/>
            <person name="Oguchi A."/>
            <person name="Aoki K."/>
            <person name="Nagai Y."/>
            <person name="Lian J.-Q."/>
            <person name="Ito T."/>
            <person name="Kanamori M."/>
            <person name="Matsumaru H."/>
            <person name="Maruyama A."/>
            <person name="Murakami H."/>
            <person name="Hosoyama A."/>
            <person name="Mizutani-Ui Y."/>
            <person name="Takahashi N.K."/>
            <person name="Sawano T."/>
            <person name="Inoue R."/>
            <person name="Kaito C."/>
            <person name="Sekimizu K."/>
            <person name="Hirakawa H."/>
            <person name="Kuhara S."/>
            <person name="Goto S."/>
            <person name="Yabuzaki J."/>
            <person name="Kanehisa M."/>
            <person name="Yamashita A."/>
            <person name="Oshima K."/>
            <person name="Furuya K."/>
            <person name="Yoshino C."/>
            <person name="Shiba T."/>
            <person name="Hattori M."/>
            <person name="Ogasawara N."/>
            <person name="Hayashi H."/>
            <person name="Hiramatsu K."/>
        </authorList>
    </citation>
    <scope>NUCLEOTIDE SEQUENCE [LARGE SCALE GENOMIC DNA]</scope>
    <source>
        <strain>N315</strain>
    </source>
</reference>
<gene>
    <name evidence="1" type="primary">thyA</name>
    <name type="ordered locus">SA1260</name>
</gene>
<organism>
    <name type="scientific">Staphylococcus aureus (strain N315)</name>
    <dbReference type="NCBI Taxonomy" id="158879"/>
    <lineage>
        <taxon>Bacteria</taxon>
        <taxon>Bacillati</taxon>
        <taxon>Bacillota</taxon>
        <taxon>Bacilli</taxon>
        <taxon>Bacillales</taxon>
        <taxon>Staphylococcaceae</taxon>
        <taxon>Staphylococcus</taxon>
    </lineage>
</organism>
<keyword id="KW-0963">Cytoplasm</keyword>
<keyword id="KW-0489">Methyltransferase</keyword>
<keyword id="KW-0545">Nucleotide biosynthesis</keyword>
<keyword id="KW-0808">Transferase</keyword>
<evidence type="ECO:0000255" key="1">
    <source>
        <dbReference type="HAMAP-Rule" id="MF_00008"/>
    </source>
</evidence>
<dbReference type="EC" id="2.1.1.45" evidence="1"/>
<dbReference type="EMBL" id="BA000018">
    <property type="protein sequence ID" value="BAB42520.1"/>
    <property type="molecule type" value="Genomic_DNA"/>
</dbReference>
<dbReference type="PIR" id="C89920">
    <property type="entry name" value="C89920"/>
</dbReference>
<dbReference type="RefSeq" id="WP_000934894.1">
    <property type="nucleotide sequence ID" value="NC_002745.2"/>
</dbReference>
<dbReference type="SMR" id="P67047"/>
<dbReference type="EnsemblBacteria" id="BAB42520">
    <property type="protein sequence ID" value="BAB42520"/>
    <property type="gene ID" value="BAB42520"/>
</dbReference>
<dbReference type="KEGG" id="sau:SA1260"/>
<dbReference type="HOGENOM" id="CLU_021669_0_2_9"/>
<dbReference type="UniPathway" id="UPA00575"/>
<dbReference type="GO" id="GO:0005829">
    <property type="term" value="C:cytosol"/>
    <property type="evidence" value="ECO:0007669"/>
    <property type="project" value="TreeGrafter"/>
</dbReference>
<dbReference type="GO" id="GO:0004799">
    <property type="term" value="F:thymidylate synthase activity"/>
    <property type="evidence" value="ECO:0007669"/>
    <property type="project" value="UniProtKB-UniRule"/>
</dbReference>
<dbReference type="GO" id="GO:0006231">
    <property type="term" value="P:dTMP biosynthetic process"/>
    <property type="evidence" value="ECO:0007669"/>
    <property type="project" value="UniProtKB-UniRule"/>
</dbReference>
<dbReference type="GO" id="GO:0006235">
    <property type="term" value="P:dTTP biosynthetic process"/>
    <property type="evidence" value="ECO:0007669"/>
    <property type="project" value="UniProtKB-UniRule"/>
</dbReference>
<dbReference type="GO" id="GO:0032259">
    <property type="term" value="P:methylation"/>
    <property type="evidence" value="ECO:0007669"/>
    <property type="project" value="UniProtKB-KW"/>
</dbReference>
<dbReference type="CDD" id="cd00351">
    <property type="entry name" value="TS_Pyrimidine_HMase"/>
    <property type="match status" value="1"/>
</dbReference>
<dbReference type="Gene3D" id="3.30.572.10">
    <property type="entry name" value="Thymidylate synthase/dCMP hydroxymethylase domain"/>
    <property type="match status" value="1"/>
</dbReference>
<dbReference type="HAMAP" id="MF_00008">
    <property type="entry name" value="Thymidy_synth_bact"/>
    <property type="match status" value="1"/>
</dbReference>
<dbReference type="InterPro" id="IPR045097">
    <property type="entry name" value="Thymidate_synth/dCMP_Mease"/>
</dbReference>
<dbReference type="InterPro" id="IPR023451">
    <property type="entry name" value="Thymidate_synth/dCMP_Mease_dom"/>
</dbReference>
<dbReference type="InterPro" id="IPR036926">
    <property type="entry name" value="Thymidate_synth/dCMP_Mease_sf"/>
</dbReference>
<dbReference type="InterPro" id="IPR000398">
    <property type="entry name" value="Thymidylate_synthase"/>
</dbReference>
<dbReference type="InterPro" id="IPR020940">
    <property type="entry name" value="Thymidylate_synthase_AS"/>
</dbReference>
<dbReference type="NCBIfam" id="NF002496">
    <property type="entry name" value="PRK01827.1-2"/>
    <property type="match status" value="1"/>
</dbReference>
<dbReference type="NCBIfam" id="TIGR03284">
    <property type="entry name" value="thym_sym"/>
    <property type="match status" value="1"/>
</dbReference>
<dbReference type="PANTHER" id="PTHR11548:SF9">
    <property type="entry name" value="THYMIDYLATE SYNTHASE"/>
    <property type="match status" value="1"/>
</dbReference>
<dbReference type="PANTHER" id="PTHR11548">
    <property type="entry name" value="THYMIDYLATE SYNTHASE 1"/>
    <property type="match status" value="1"/>
</dbReference>
<dbReference type="Pfam" id="PF00303">
    <property type="entry name" value="Thymidylat_synt"/>
    <property type="match status" value="1"/>
</dbReference>
<dbReference type="PRINTS" id="PR00108">
    <property type="entry name" value="THYMDSNTHASE"/>
</dbReference>
<dbReference type="SUPFAM" id="SSF55831">
    <property type="entry name" value="Thymidylate synthase/dCMP hydroxymethylase"/>
    <property type="match status" value="1"/>
</dbReference>
<dbReference type="PROSITE" id="PS00091">
    <property type="entry name" value="THYMIDYLATE_SYNTHASE"/>
    <property type="match status" value="1"/>
</dbReference>
<proteinExistence type="inferred from homology"/>
<feature type="chain" id="PRO_0000141019" description="Thymidylate synthase">
    <location>
        <begin position="1"/>
        <end position="318"/>
    </location>
</feature>
<feature type="active site" description="Nucleophile" evidence="1">
    <location>
        <position position="201"/>
    </location>
</feature>
<feature type="binding site" description="in other chain" evidence="1">
    <location>
        <position position="26"/>
    </location>
    <ligand>
        <name>dUMP</name>
        <dbReference type="ChEBI" id="CHEBI:246422"/>
        <note>ligand shared between dimeric partners</note>
    </ligand>
</feature>
<feature type="binding site" evidence="1">
    <location>
        <begin position="181"/>
        <end position="182"/>
    </location>
    <ligand>
        <name>dUMP</name>
        <dbReference type="ChEBI" id="CHEBI:246422"/>
        <note>ligand shared between dimeric partners</note>
    </ligand>
</feature>
<feature type="binding site" description="in other chain" evidence="1">
    <location>
        <begin position="221"/>
        <end position="224"/>
    </location>
    <ligand>
        <name>dUMP</name>
        <dbReference type="ChEBI" id="CHEBI:246422"/>
        <note>ligand shared between dimeric partners</note>
    </ligand>
</feature>
<feature type="binding site" evidence="1">
    <location>
        <position position="224"/>
    </location>
    <ligand>
        <name>(6R)-5,10-methylene-5,6,7,8-tetrahydrofolate</name>
        <dbReference type="ChEBI" id="CHEBI:15636"/>
    </ligand>
</feature>
<feature type="binding site" description="in other chain" evidence="1">
    <location>
        <position position="232"/>
    </location>
    <ligand>
        <name>dUMP</name>
        <dbReference type="ChEBI" id="CHEBI:246422"/>
        <note>ligand shared between dimeric partners</note>
    </ligand>
</feature>
<feature type="binding site" description="in other chain" evidence="1">
    <location>
        <begin position="262"/>
        <end position="264"/>
    </location>
    <ligand>
        <name>dUMP</name>
        <dbReference type="ChEBI" id="CHEBI:246422"/>
        <note>ligand shared between dimeric partners</note>
    </ligand>
</feature>
<feature type="binding site" evidence="1">
    <location>
        <position position="317"/>
    </location>
    <ligand>
        <name>(6R)-5,10-methylene-5,6,7,8-tetrahydrofolate</name>
        <dbReference type="ChEBI" id="CHEBI:15636"/>
    </ligand>
</feature>
<comment type="function">
    <text evidence="1">Catalyzes the reductive methylation of 2'-deoxyuridine-5'-monophosphate (dUMP) to 2'-deoxythymidine-5'-monophosphate (dTMP) while utilizing 5,10-methylenetetrahydrofolate (mTHF) as the methyl donor and reductant in the reaction, yielding dihydrofolate (DHF) as a by-product. This enzymatic reaction provides an intracellular de novo source of dTMP, an essential precursor for DNA biosynthesis.</text>
</comment>
<comment type="catalytic activity">
    <reaction evidence="1">
        <text>dUMP + (6R)-5,10-methylene-5,6,7,8-tetrahydrofolate = 7,8-dihydrofolate + dTMP</text>
        <dbReference type="Rhea" id="RHEA:12104"/>
        <dbReference type="ChEBI" id="CHEBI:15636"/>
        <dbReference type="ChEBI" id="CHEBI:57451"/>
        <dbReference type="ChEBI" id="CHEBI:63528"/>
        <dbReference type="ChEBI" id="CHEBI:246422"/>
        <dbReference type="EC" id="2.1.1.45"/>
    </reaction>
</comment>
<comment type="pathway">
    <text evidence="1">Pyrimidine metabolism; dTTP biosynthesis.</text>
</comment>
<comment type="subunit">
    <text evidence="1">Homodimer.</text>
</comment>
<comment type="subcellular location">
    <subcellularLocation>
        <location evidence="1">Cytoplasm</location>
    </subcellularLocation>
</comment>
<comment type="similarity">
    <text evidence="1">Belongs to the thymidylate synthase family. Bacterial-type ThyA subfamily.</text>
</comment>
<protein>
    <recommendedName>
        <fullName evidence="1">Thymidylate synthase</fullName>
        <shortName evidence="1">TS</shortName>
        <shortName evidence="1">TSase</shortName>
        <ecNumber evidence="1">2.1.1.45</ecNumber>
    </recommendedName>
</protein>